<gene>
    <name evidence="1" type="primary">truD</name>
    <name type="ordered locus">MS2273</name>
</gene>
<reference key="1">
    <citation type="journal article" date="2004" name="Nat. Biotechnol.">
        <title>The genome sequence of the capnophilic rumen bacterium Mannheimia succiniciproducens.</title>
        <authorList>
            <person name="Hong S.H."/>
            <person name="Kim J.S."/>
            <person name="Lee S.Y."/>
            <person name="In Y.H."/>
            <person name="Choi S.S."/>
            <person name="Rih J.-K."/>
            <person name="Kim C.H."/>
            <person name="Jeong H."/>
            <person name="Hur C.G."/>
            <person name="Kim J.J."/>
        </authorList>
    </citation>
    <scope>NUCLEOTIDE SEQUENCE [LARGE SCALE GENOMIC DNA]</scope>
    <source>
        <strain>KCTC 0769BP / MBEL55E</strain>
    </source>
</reference>
<comment type="function">
    <text evidence="1">Responsible for synthesis of pseudouridine from uracil-13 in transfer RNAs.</text>
</comment>
<comment type="catalytic activity">
    <reaction evidence="1">
        <text>uridine(13) in tRNA = pseudouridine(13) in tRNA</text>
        <dbReference type="Rhea" id="RHEA:42540"/>
        <dbReference type="Rhea" id="RHEA-COMP:10105"/>
        <dbReference type="Rhea" id="RHEA-COMP:10106"/>
        <dbReference type="ChEBI" id="CHEBI:65314"/>
        <dbReference type="ChEBI" id="CHEBI:65315"/>
        <dbReference type="EC" id="5.4.99.27"/>
    </reaction>
</comment>
<comment type="similarity">
    <text evidence="1">Belongs to the pseudouridine synthase TruD family.</text>
</comment>
<dbReference type="EC" id="5.4.99.27" evidence="1"/>
<dbReference type="EMBL" id="AE016827">
    <property type="protein sequence ID" value="AAU38880.1"/>
    <property type="molecule type" value="Genomic_DNA"/>
</dbReference>
<dbReference type="RefSeq" id="WP_011201422.1">
    <property type="nucleotide sequence ID" value="NC_006300.1"/>
</dbReference>
<dbReference type="SMR" id="Q65Q80"/>
<dbReference type="STRING" id="221988.MS2273"/>
<dbReference type="KEGG" id="msu:MS2273"/>
<dbReference type="eggNOG" id="COG0585">
    <property type="taxonomic scope" value="Bacteria"/>
</dbReference>
<dbReference type="HOGENOM" id="CLU_005281_4_0_6"/>
<dbReference type="OrthoDB" id="1550679at2"/>
<dbReference type="Proteomes" id="UP000000607">
    <property type="component" value="Chromosome"/>
</dbReference>
<dbReference type="GO" id="GO:0005829">
    <property type="term" value="C:cytosol"/>
    <property type="evidence" value="ECO:0007669"/>
    <property type="project" value="TreeGrafter"/>
</dbReference>
<dbReference type="GO" id="GO:0003723">
    <property type="term" value="F:RNA binding"/>
    <property type="evidence" value="ECO:0007669"/>
    <property type="project" value="InterPro"/>
</dbReference>
<dbReference type="GO" id="GO:0160150">
    <property type="term" value="F:tRNA pseudouridine(13) synthase activity"/>
    <property type="evidence" value="ECO:0007669"/>
    <property type="project" value="UniProtKB-EC"/>
</dbReference>
<dbReference type="GO" id="GO:0031119">
    <property type="term" value="P:tRNA pseudouridine synthesis"/>
    <property type="evidence" value="ECO:0007669"/>
    <property type="project" value="UniProtKB-UniRule"/>
</dbReference>
<dbReference type="CDD" id="cd02575">
    <property type="entry name" value="PseudoU_synth_EcTruD"/>
    <property type="match status" value="1"/>
</dbReference>
<dbReference type="Gene3D" id="3.30.2350.20">
    <property type="entry name" value="TruD, catalytic domain"/>
    <property type="match status" value="1"/>
</dbReference>
<dbReference type="Gene3D" id="3.30.2340.10">
    <property type="entry name" value="TruD, insertion domain"/>
    <property type="match status" value="1"/>
</dbReference>
<dbReference type="HAMAP" id="MF_01082">
    <property type="entry name" value="TruD"/>
    <property type="match status" value="1"/>
</dbReference>
<dbReference type="InterPro" id="IPR020103">
    <property type="entry name" value="PsdUridine_synth_cat_dom_sf"/>
</dbReference>
<dbReference type="InterPro" id="IPR001656">
    <property type="entry name" value="PsdUridine_synth_TruD"/>
</dbReference>
<dbReference type="InterPro" id="IPR020119">
    <property type="entry name" value="PsdUridine_synth_TruD_CS"/>
</dbReference>
<dbReference type="InterPro" id="IPR011760">
    <property type="entry name" value="PsdUridine_synth_TruD_insert"/>
</dbReference>
<dbReference type="InterPro" id="IPR042214">
    <property type="entry name" value="TruD_catalytic"/>
</dbReference>
<dbReference type="InterPro" id="IPR043165">
    <property type="entry name" value="TruD_insert_sf"/>
</dbReference>
<dbReference type="InterPro" id="IPR050170">
    <property type="entry name" value="TruD_pseudoU_synthase"/>
</dbReference>
<dbReference type="NCBIfam" id="NF002155">
    <property type="entry name" value="PRK00984.1-4"/>
    <property type="match status" value="1"/>
</dbReference>
<dbReference type="NCBIfam" id="TIGR00094">
    <property type="entry name" value="tRNA_TruD_broad"/>
    <property type="match status" value="1"/>
</dbReference>
<dbReference type="PANTHER" id="PTHR47811">
    <property type="entry name" value="TRNA PSEUDOURIDINE SYNTHASE D"/>
    <property type="match status" value="1"/>
</dbReference>
<dbReference type="PANTHER" id="PTHR47811:SF1">
    <property type="entry name" value="TRNA PSEUDOURIDINE SYNTHASE D"/>
    <property type="match status" value="1"/>
</dbReference>
<dbReference type="Pfam" id="PF01142">
    <property type="entry name" value="TruD"/>
    <property type="match status" value="2"/>
</dbReference>
<dbReference type="SUPFAM" id="SSF55120">
    <property type="entry name" value="Pseudouridine synthase"/>
    <property type="match status" value="1"/>
</dbReference>
<dbReference type="PROSITE" id="PS50984">
    <property type="entry name" value="TRUD"/>
    <property type="match status" value="1"/>
</dbReference>
<dbReference type="PROSITE" id="PS01268">
    <property type="entry name" value="UPF0024"/>
    <property type="match status" value="1"/>
</dbReference>
<name>TRUD_MANSM</name>
<evidence type="ECO:0000255" key="1">
    <source>
        <dbReference type="HAMAP-Rule" id="MF_01082"/>
    </source>
</evidence>
<feature type="chain" id="PRO_0000152510" description="tRNA pseudouridine synthase D">
    <location>
        <begin position="1"/>
        <end position="337"/>
    </location>
</feature>
<feature type="domain" description="TRUD" evidence="1">
    <location>
        <begin position="152"/>
        <end position="308"/>
    </location>
</feature>
<feature type="active site" description="Nucleophile" evidence="1">
    <location>
        <position position="77"/>
    </location>
</feature>
<protein>
    <recommendedName>
        <fullName evidence="1">tRNA pseudouridine synthase D</fullName>
        <ecNumber evidence="1">5.4.99.27</ecNumber>
    </recommendedName>
    <alternativeName>
        <fullName evidence="1">tRNA pseudouridine(13) synthase</fullName>
    </alternativeName>
    <alternativeName>
        <fullName evidence="1">tRNA pseudouridylate synthase D</fullName>
    </alternativeName>
    <alternativeName>
        <fullName evidence="1">tRNA-uridine isomerase D</fullName>
    </alternativeName>
</protein>
<sequence>MLELAYLQTLPQQRALLKADYADFIVKEDLGYAMTGEGEFVALYVRKTDANTLFVGEQLAKFVGLSPRNMGYAGLKDRKAVTEQWFCLQMPGKAMPDFSRFNMAGVEILQVTRHSRKIRTGSLNGNHFEILLRNAVETDELKVRLENIKNFGFPNYFTEQRFGKDGHNLTQAMRWANGEIKVKDRKKRSFYLSAARSEVFNLVVSERIRQGLANQVLAHDILQLAGTHSWFTADGKEDLALLQTRLENHDLQLTAPLIGETQQLACELENKLVERHQSLISLMKRERMKPARRPLLMQARDFHWEFVENGLKLKFYLPAGSYATALVRELVNIDENE</sequence>
<accession>Q65Q80</accession>
<proteinExistence type="inferred from homology"/>
<organism>
    <name type="scientific">Mannheimia succiniciproducens (strain KCTC 0769BP / MBEL55E)</name>
    <dbReference type="NCBI Taxonomy" id="221988"/>
    <lineage>
        <taxon>Bacteria</taxon>
        <taxon>Pseudomonadati</taxon>
        <taxon>Pseudomonadota</taxon>
        <taxon>Gammaproteobacteria</taxon>
        <taxon>Pasteurellales</taxon>
        <taxon>Pasteurellaceae</taxon>
        <taxon>Basfia</taxon>
    </lineage>
</organism>
<keyword id="KW-0413">Isomerase</keyword>
<keyword id="KW-0819">tRNA processing</keyword>